<feature type="chain" id="PRO_0000202318" description="Uncharacterized protein TP_0763">
    <location>
        <begin position="1"/>
        <end position="313"/>
    </location>
</feature>
<feature type="transmembrane region" description="Helical" evidence="1">
    <location>
        <begin position="42"/>
        <end position="64"/>
    </location>
</feature>
<feature type="transmembrane region" description="Helical" evidence="1">
    <location>
        <begin position="74"/>
        <end position="96"/>
    </location>
</feature>
<reference key="1">
    <citation type="journal article" date="1998" name="Science">
        <title>Complete genome sequence of Treponema pallidum, the syphilis spirochete.</title>
        <authorList>
            <person name="Fraser C.M."/>
            <person name="Norris S.J."/>
            <person name="Weinstock G.M."/>
            <person name="White O."/>
            <person name="Sutton G.G."/>
            <person name="Dodson R.J."/>
            <person name="Gwinn M.L."/>
            <person name="Hickey E.K."/>
            <person name="Clayton R.A."/>
            <person name="Ketchum K.A."/>
            <person name="Sodergren E."/>
            <person name="Hardham J.M."/>
            <person name="McLeod M.P."/>
            <person name="Salzberg S.L."/>
            <person name="Peterson J.D."/>
            <person name="Khalak H.G."/>
            <person name="Richardson D.L."/>
            <person name="Howell J.K."/>
            <person name="Chidambaram M."/>
            <person name="Utterback T.R."/>
            <person name="McDonald L.A."/>
            <person name="Artiach P."/>
            <person name="Bowman C."/>
            <person name="Cotton M.D."/>
            <person name="Fujii C."/>
            <person name="Garland S.A."/>
            <person name="Hatch B."/>
            <person name="Horst K."/>
            <person name="Roberts K.M."/>
            <person name="Sandusky M."/>
            <person name="Weidman J.F."/>
            <person name="Smith H.O."/>
            <person name="Venter J.C."/>
        </authorList>
    </citation>
    <scope>NUCLEOTIDE SEQUENCE [LARGE SCALE GENOMIC DNA]</scope>
    <source>
        <strain>Nichols</strain>
    </source>
</reference>
<evidence type="ECO:0000255" key="1"/>
<evidence type="ECO:0000305" key="2"/>
<comment type="subcellular location">
    <subcellularLocation>
        <location evidence="2">Cell membrane</location>
        <topology evidence="2">Multi-pass membrane protein</topology>
    </subcellularLocation>
</comment>
<sequence length="313" mass="36156">MGFLGYIYNCIRIHVSLAPIVEWRPAQAGRQYRRFPMKIKALVVLFNGALLLLCMGTGYVLFLTPVRGTGWQSVRAYGIFFLIFLLLFLLINTLYVKNRRLLRYLDAEDWSALAALLEEEVFTRNRVALRRVSLLSESLILLSDFEALERLEHFVHAQRPRYIMKCALTFAVGKLLAGKYSELRTFMTRVAATQAPVQPWTRFYLAFACHLCGDFEQAHAHLLTLVHTKRQPLIRVLSAYLLSEVLPEKLRRAPAHDAQLIARGCAHAAQVRADVHAHYTPRRWADYENRKKQNVDVLVFLKLMQDARAWLFP</sequence>
<proteinExistence type="predicted"/>
<accession>O83744</accession>
<protein>
    <recommendedName>
        <fullName>Uncharacterized protein TP_0763</fullName>
    </recommendedName>
</protein>
<keyword id="KW-1003">Cell membrane</keyword>
<keyword id="KW-0472">Membrane</keyword>
<keyword id="KW-1185">Reference proteome</keyword>
<keyword id="KW-0812">Transmembrane</keyword>
<keyword id="KW-1133">Transmembrane helix</keyword>
<gene>
    <name type="ordered locus">TP_0763</name>
</gene>
<name>Y763_TREPA</name>
<organism>
    <name type="scientific">Treponema pallidum (strain Nichols)</name>
    <dbReference type="NCBI Taxonomy" id="243276"/>
    <lineage>
        <taxon>Bacteria</taxon>
        <taxon>Pseudomonadati</taxon>
        <taxon>Spirochaetota</taxon>
        <taxon>Spirochaetia</taxon>
        <taxon>Spirochaetales</taxon>
        <taxon>Treponemataceae</taxon>
        <taxon>Treponema</taxon>
    </lineage>
</organism>
<dbReference type="EMBL" id="AE000520">
    <property type="protein sequence ID" value="AAC65734.1"/>
    <property type="molecule type" value="Genomic_DNA"/>
</dbReference>
<dbReference type="PIR" id="F71285">
    <property type="entry name" value="F71285"/>
</dbReference>
<dbReference type="SMR" id="O83744"/>
<dbReference type="IntAct" id="O83744">
    <property type="interactions" value="3"/>
</dbReference>
<dbReference type="EnsemblBacteria" id="AAC65734">
    <property type="protein sequence ID" value="AAC65734"/>
    <property type="gene ID" value="TP_0763"/>
</dbReference>
<dbReference type="KEGG" id="tpa:TP_0763"/>
<dbReference type="KEGG" id="tpw:TPANIC_0763"/>
<dbReference type="eggNOG" id="ENOG5033YSU">
    <property type="taxonomic scope" value="Bacteria"/>
</dbReference>
<dbReference type="HOGENOM" id="CLU_086052_0_0_12"/>
<dbReference type="Proteomes" id="UP000000811">
    <property type="component" value="Chromosome"/>
</dbReference>
<dbReference type="GO" id="GO:0005886">
    <property type="term" value="C:plasma membrane"/>
    <property type="evidence" value="ECO:0007669"/>
    <property type="project" value="UniProtKB-SubCell"/>
</dbReference>